<name>RECA_STAA1</name>
<comment type="function">
    <text evidence="1">Can catalyze the hydrolysis of ATP in the presence of single-stranded DNA, the ATP-dependent uptake of single-stranded DNA by duplex DNA, and the ATP-dependent hybridization of homologous single-stranded DNAs. It interacts with LexA causing its activation and leading to its autocatalytic cleavage.</text>
</comment>
<comment type="subcellular location">
    <subcellularLocation>
        <location evidence="1">Cytoplasm</location>
    </subcellularLocation>
</comment>
<comment type="similarity">
    <text evidence="1">Belongs to the RecA family.</text>
</comment>
<sequence length="347" mass="37657">MDNDRQKALDTVIKNMEKSFGKGAVMKLGDNIGRRVSTTSTGSVTLDNALGVGGYPKGRIIEIYGPESSGKTTVALHAIAEVQSNGGVAAFIDAEHALDPEYAQALGVDIDNLYLSQPDHGEQGLEIAEAFVRSGAVDIVVVDSVAALTPKAEIEGEMGDTHVGLQARLMSQALRKLSGAISKSNTTAIFINQIREKVGVMFGNPETTPGGRALKFYSSVRLEVRRAEQLKQGQEIVGNRTKIKVVKNKVAPPFRVAEVDIMYGQGISKEGELIDLGVENDIVDKSGAWYSYNGERMGQGKENVKMYLKENPQIKEEIDRKLREKLGISDGDVEETEDAPKSLFDEE</sequence>
<reference key="1">
    <citation type="journal article" date="2008" name="Antimicrob. Agents Chemother.">
        <title>Mutated response regulator graR is responsible for phenotypic conversion of Staphylococcus aureus from heterogeneous vancomycin-intermediate resistance to vancomycin-intermediate resistance.</title>
        <authorList>
            <person name="Neoh H.-M."/>
            <person name="Cui L."/>
            <person name="Yuzawa H."/>
            <person name="Takeuchi F."/>
            <person name="Matsuo M."/>
            <person name="Hiramatsu K."/>
        </authorList>
    </citation>
    <scope>NUCLEOTIDE SEQUENCE [LARGE SCALE GENOMIC DNA]</scope>
    <source>
        <strain>Mu3 / ATCC 700698</strain>
    </source>
</reference>
<protein>
    <recommendedName>
        <fullName evidence="1">Protein RecA</fullName>
    </recommendedName>
    <alternativeName>
        <fullName evidence="1">Recombinase A</fullName>
    </alternativeName>
</protein>
<organism>
    <name type="scientific">Staphylococcus aureus (strain Mu3 / ATCC 700698)</name>
    <dbReference type="NCBI Taxonomy" id="418127"/>
    <lineage>
        <taxon>Bacteria</taxon>
        <taxon>Bacillati</taxon>
        <taxon>Bacillota</taxon>
        <taxon>Bacilli</taxon>
        <taxon>Bacillales</taxon>
        <taxon>Staphylococcaceae</taxon>
        <taxon>Staphylococcus</taxon>
    </lineage>
</organism>
<evidence type="ECO:0000255" key="1">
    <source>
        <dbReference type="HAMAP-Rule" id="MF_00268"/>
    </source>
</evidence>
<evidence type="ECO:0000256" key="2">
    <source>
        <dbReference type="SAM" id="MobiDB-lite"/>
    </source>
</evidence>
<proteinExistence type="inferred from homology"/>
<gene>
    <name evidence="1" type="primary">recA</name>
    <name type="ordered locus">SAHV_1275</name>
</gene>
<keyword id="KW-0067">ATP-binding</keyword>
<keyword id="KW-0963">Cytoplasm</keyword>
<keyword id="KW-0227">DNA damage</keyword>
<keyword id="KW-0233">DNA recombination</keyword>
<keyword id="KW-0234">DNA repair</keyword>
<keyword id="KW-0238">DNA-binding</keyword>
<keyword id="KW-0547">Nucleotide-binding</keyword>
<keyword id="KW-0742">SOS response</keyword>
<dbReference type="EMBL" id="AP009324">
    <property type="protein sequence ID" value="BAF78158.1"/>
    <property type="molecule type" value="Genomic_DNA"/>
</dbReference>
<dbReference type="RefSeq" id="WP_000368166.1">
    <property type="nucleotide sequence ID" value="NZ_CTYB01000004.1"/>
</dbReference>
<dbReference type="SMR" id="A7X1S3"/>
<dbReference type="KEGG" id="saw:SAHV_1275"/>
<dbReference type="HOGENOM" id="CLU_040469_1_2_9"/>
<dbReference type="GO" id="GO:0005829">
    <property type="term" value="C:cytosol"/>
    <property type="evidence" value="ECO:0007669"/>
    <property type="project" value="TreeGrafter"/>
</dbReference>
<dbReference type="GO" id="GO:0005524">
    <property type="term" value="F:ATP binding"/>
    <property type="evidence" value="ECO:0007669"/>
    <property type="project" value="UniProtKB-UniRule"/>
</dbReference>
<dbReference type="GO" id="GO:0016887">
    <property type="term" value="F:ATP hydrolysis activity"/>
    <property type="evidence" value="ECO:0007669"/>
    <property type="project" value="InterPro"/>
</dbReference>
<dbReference type="GO" id="GO:0140664">
    <property type="term" value="F:ATP-dependent DNA damage sensor activity"/>
    <property type="evidence" value="ECO:0007669"/>
    <property type="project" value="InterPro"/>
</dbReference>
<dbReference type="GO" id="GO:0003684">
    <property type="term" value="F:damaged DNA binding"/>
    <property type="evidence" value="ECO:0007669"/>
    <property type="project" value="UniProtKB-UniRule"/>
</dbReference>
<dbReference type="GO" id="GO:0003697">
    <property type="term" value="F:single-stranded DNA binding"/>
    <property type="evidence" value="ECO:0007669"/>
    <property type="project" value="UniProtKB-UniRule"/>
</dbReference>
<dbReference type="GO" id="GO:0006310">
    <property type="term" value="P:DNA recombination"/>
    <property type="evidence" value="ECO:0007669"/>
    <property type="project" value="UniProtKB-UniRule"/>
</dbReference>
<dbReference type="GO" id="GO:0006281">
    <property type="term" value="P:DNA repair"/>
    <property type="evidence" value="ECO:0007669"/>
    <property type="project" value="UniProtKB-UniRule"/>
</dbReference>
<dbReference type="GO" id="GO:0009432">
    <property type="term" value="P:SOS response"/>
    <property type="evidence" value="ECO:0007669"/>
    <property type="project" value="UniProtKB-UniRule"/>
</dbReference>
<dbReference type="CDD" id="cd00983">
    <property type="entry name" value="RecA"/>
    <property type="match status" value="1"/>
</dbReference>
<dbReference type="FunFam" id="3.40.50.300:FF:000087">
    <property type="entry name" value="Recombinase RecA"/>
    <property type="match status" value="1"/>
</dbReference>
<dbReference type="Gene3D" id="3.40.50.300">
    <property type="entry name" value="P-loop containing nucleotide triphosphate hydrolases"/>
    <property type="match status" value="1"/>
</dbReference>
<dbReference type="HAMAP" id="MF_00268">
    <property type="entry name" value="RecA"/>
    <property type="match status" value="1"/>
</dbReference>
<dbReference type="InterPro" id="IPR003593">
    <property type="entry name" value="AAA+_ATPase"/>
</dbReference>
<dbReference type="InterPro" id="IPR013765">
    <property type="entry name" value="DNA_recomb/repair_RecA"/>
</dbReference>
<dbReference type="InterPro" id="IPR020584">
    <property type="entry name" value="DNA_recomb/repair_RecA_CS"/>
</dbReference>
<dbReference type="InterPro" id="IPR027417">
    <property type="entry name" value="P-loop_NTPase"/>
</dbReference>
<dbReference type="InterPro" id="IPR049261">
    <property type="entry name" value="RecA-like_C"/>
</dbReference>
<dbReference type="InterPro" id="IPR049428">
    <property type="entry name" value="RecA-like_N"/>
</dbReference>
<dbReference type="InterPro" id="IPR020588">
    <property type="entry name" value="RecA_ATP-bd"/>
</dbReference>
<dbReference type="InterPro" id="IPR023400">
    <property type="entry name" value="RecA_C_sf"/>
</dbReference>
<dbReference type="InterPro" id="IPR020587">
    <property type="entry name" value="RecA_monomer-monomer_interface"/>
</dbReference>
<dbReference type="NCBIfam" id="TIGR02012">
    <property type="entry name" value="tigrfam_recA"/>
    <property type="match status" value="1"/>
</dbReference>
<dbReference type="PANTHER" id="PTHR45900:SF1">
    <property type="entry name" value="MITOCHONDRIAL DNA REPAIR PROTEIN RECA HOMOLOG-RELATED"/>
    <property type="match status" value="1"/>
</dbReference>
<dbReference type="PANTHER" id="PTHR45900">
    <property type="entry name" value="RECA"/>
    <property type="match status" value="1"/>
</dbReference>
<dbReference type="Pfam" id="PF00154">
    <property type="entry name" value="RecA"/>
    <property type="match status" value="1"/>
</dbReference>
<dbReference type="Pfam" id="PF21096">
    <property type="entry name" value="RecA_C"/>
    <property type="match status" value="1"/>
</dbReference>
<dbReference type="PRINTS" id="PR00142">
    <property type="entry name" value="RECA"/>
</dbReference>
<dbReference type="SMART" id="SM00382">
    <property type="entry name" value="AAA"/>
    <property type="match status" value="1"/>
</dbReference>
<dbReference type="SUPFAM" id="SSF52540">
    <property type="entry name" value="P-loop containing nucleoside triphosphate hydrolases"/>
    <property type="match status" value="1"/>
</dbReference>
<dbReference type="SUPFAM" id="SSF54752">
    <property type="entry name" value="RecA protein, C-terminal domain"/>
    <property type="match status" value="1"/>
</dbReference>
<dbReference type="PROSITE" id="PS00321">
    <property type="entry name" value="RECA_1"/>
    <property type="match status" value="1"/>
</dbReference>
<dbReference type="PROSITE" id="PS50162">
    <property type="entry name" value="RECA_2"/>
    <property type="match status" value="1"/>
</dbReference>
<dbReference type="PROSITE" id="PS50163">
    <property type="entry name" value="RECA_3"/>
    <property type="match status" value="1"/>
</dbReference>
<feature type="chain" id="PRO_1000048007" description="Protein RecA">
    <location>
        <begin position="1"/>
        <end position="347"/>
    </location>
</feature>
<feature type="region of interest" description="Disordered" evidence="2">
    <location>
        <begin position="325"/>
        <end position="347"/>
    </location>
</feature>
<feature type="compositionally biased region" description="Basic and acidic residues" evidence="2">
    <location>
        <begin position="338"/>
        <end position="347"/>
    </location>
</feature>
<feature type="binding site" evidence="1">
    <location>
        <begin position="65"/>
        <end position="72"/>
    </location>
    <ligand>
        <name>ATP</name>
        <dbReference type="ChEBI" id="CHEBI:30616"/>
    </ligand>
</feature>
<accession>A7X1S3</accession>